<comment type="function">
    <text evidence="1">Molecular chaperone capable of stabilizing a range of proteins. Seems to fulfill an ATP-independent, HSP70-like function in archaeal de novo protein folding (By similarity).</text>
</comment>
<comment type="subunit">
    <text evidence="1">Heterohexamer of two alpha and four beta subunits.</text>
</comment>
<comment type="interaction">
    <interactant intactId="EBI-9014072">
        <id>O58263</id>
    </interactant>
    <interactant intactId="EBI-9014082">
        <id>O58268</id>
        <label>pfdB</label>
    </interactant>
    <organismsDiffer>false</organismsDiffer>
    <experiments>2</experiments>
</comment>
<comment type="subcellular location">
    <subcellularLocation>
        <location evidence="1">Cytoplasm</location>
    </subcellularLocation>
</comment>
<comment type="similarity">
    <text evidence="2">Belongs to the prefoldin subunit alpha family.</text>
</comment>
<comment type="sequence caution" evidence="2">
    <conflict type="erroneous initiation">
        <sequence resource="EMBL-CDS" id="BAA29615"/>
    </conflict>
</comment>
<name>PFDA_PYRHO</name>
<gene>
    <name type="primary">pfdA</name>
    <name type="ordered locus">PH0527</name>
</gene>
<organism>
    <name type="scientific">Pyrococcus horikoshii (strain ATCC 700860 / DSM 12428 / JCM 9974 / NBRC 100139 / OT-3)</name>
    <dbReference type="NCBI Taxonomy" id="70601"/>
    <lineage>
        <taxon>Archaea</taxon>
        <taxon>Methanobacteriati</taxon>
        <taxon>Methanobacteriota</taxon>
        <taxon>Thermococci</taxon>
        <taxon>Thermococcales</taxon>
        <taxon>Thermococcaceae</taxon>
        <taxon>Pyrococcus</taxon>
    </lineage>
</organism>
<keyword id="KW-0002">3D-structure</keyword>
<keyword id="KW-0143">Chaperone</keyword>
<keyword id="KW-0963">Cytoplasm</keyword>
<protein>
    <recommendedName>
        <fullName>Prefoldin subunit alpha</fullName>
    </recommendedName>
    <alternativeName>
        <fullName>GimC subunit alpha</fullName>
    </alternativeName>
</protein>
<proteinExistence type="evidence at protein level"/>
<sequence length="148" mass="16603">MAQNNKELEKLAYEYQVLQAQAQILAQNLELLNLAKAEVQTVRETLENLKKIEEEKPEILVPIGAGSFLKGVIVDKNNAIVSVGSGYAVERSIDEAISFLEKRLKEYDEAIKKTQGALAELEKRIGEVARKAQEVQQKQSMTSFKVKK</sequence>
<evidence type="ECO:0000250" key="1"/>
<evidence type="ECO:0000305" key="2"/>
<evidence type="ECO:0007829" key="3">
    <source>
        <dbReference type="PDB" id="2ZDI"/>
    </source>
</evidence>
<feature type="chain" id="PRO_0000153684" description="Prefoldin subunit alpha">
    <location>
        <begin position="1"/>
        <end position="148"/>
    </location>
</feature>
<feature type="helix" evidence="3">
    <location>
        <begin position="7"/>
        <end position="18"/>
    </location>
</feature>
<feature type="turn" evidence="3">
    <location>
        <begin position="19"/>
        <end position="22"/>
    </location>
</feature>
<feature type="helix" evidence="3">
    <location>
        <begin position="23"/>
        <end position="49"/>
    </location>
</feature>
<feature type="strand" evidence="3">
    <location>
        <begin position="58"/>
        <end position="62"/>
    </location>
</feature>
<feature type="strand" evidence="3">
    <location>
        <begin position="64"/>
        <end position="66"/>
    </location>
</feature>
<feature type="strand" evidence="3">
    <location>
        <begin position="68"/>
        <end position="72"/>
    </location>
</feature>
<feature type="strand" evidence="3">
    <location>
        <begin position="78"/>
        <end position="84"/>
    </location>
</feature>
<feature type="strand" evidence="3">
    <location>
        <begin position="87"/>
        <end position="92"/>
    </location>
</feature>
<feature type="helix" evidence="3">
    <location>
        <begin position="93"/>
        <end position="126"/>
    </location>
</feature>
<feature type="helix" evidence="3">
    <location>
        <begin position="128"/>
        <end position="137"/>
    </location>
</feature>
<feature type="turn" evidence="3">
    <location>
        <begin position="138"/>
        <end position="143"/>
    </location>
</feature>
<dbReference type="EMBL" id="BA000001">
    <property type="protein sequence ID" value="BAA29615.1"/>
    <property type="status" value="ALT_INIT"/>
    <property type="molecule type" value="Genomic_DNA"/>
</dbReference>
<dbReference type="PIR" id="B71166">
    <property type="entry name" value="B71166"/>
</dbReference>
<dbReference type="RefSeq" id="WP_048053149.1">
    <property type="nucleotide sequence ID" value="NC_000961.1"/>
</dbReference>
<dbReference type="PDB" id="2ZDI">
    <property type="method" value="X-ray"/>
    <property type="resolution" value="3.00 A"/>
    <property type="chains" value="C=1-148"/>
</dbReference>
<dbReference type="PDBsum" id="2ZDI"/>
<dbReference type="SMR" id="O58263"/>
<dbReference type="DIP" id="DIP-29170N"/>
<dbReference type="IntAct" id="O58263">
    <property type="interactions" value="2"/>
</dbReference>
<dbReference type="STRING" id="70601.gene:9377461"/>
<dbReference type="EnsemblBacteria" id="BAA29615">
    <property type="protein sequence ID" value="BAA29615"/>
    <property type="gene ID" value="BAA29615"/>
</dbReference>
<dbReference type="GeneID" id="1444414"/>
<dbReference type="KEGG" id="pho:PH0527"/>
<dbReference type="eggNOG" id="arCOG01341">
    <property type="taxonomic scope" value="Archaea"/>
</dbReference>
<dbReference type="OrthoDB" id="10045at2157"/>
<dbReference type="EvolutionaryTrace" id="O58263"/>
<dbReference type="Proteomes" id="UP000000752">
    <property type="component" value="Chromosome"/>
</dbReference>
<dbReference type="GO" id="GO:0005737">
    <property type="term" value="C:cytoplasm"/>
    <property type="evidence" value="ECO:0007669"/>
    <property type="project" value="UniProtKB-SubCell"/>
</dbReference>
<dbReference type="GO" id="GO:0016272">
    <property type="term" value="C:prefoldin complex"/>
    <property type="evidence" value="ECO:0007669"/>
    <property type="project" value="UniProtKB-UniRule"/>
</dbReference>
<dbReference type="GO" id="GO:0051082">
    <property type="term" value="F:unfolded protein binding"/>
    <property type="evidence" value="ECO:0007669"/>
    <property type="project" value="UniProtKB-UniRule"/>
</dbReference>
<dbReference type="GO" id="GO:0006457">
    <property type="term" value="P:protein folding"/>
    <property type="evidence" value="ECO:0007669"/>
    <property type="project" value="UniProtKB-UniRule"/>
</dbReference>
<dbReference type="CDD" id="cd23160">
    <property type="entry name" value="Prefoldin_alpha_GimC"/>
    <property type="match status" value="1"/>
</dbReference>
<dbReference type="Gene3D" id="1.10.287.370">
    <property type="match status" value="1"/>
</dbReference>
<dbReference type="HAMAP" id="MF_00308">
    <property type="entry name" value="PfdA"/>
    <property type="match status" value="1"/>
</dbReference>
<dbReference type="InterPro" id="IPR011599">
    <property type="entry name" value="PFD_alpha_archaea"/>
</dbReference>
<dbReference type="InterPro" id="IPR009053">
    <property type="entry name" value="Prefoldin"/>
</dbReference>
<dbReference type="InterPro" id="IPR004127">
    <property type="entry name" value="Prefoldin_subunit_alpha"/>
</dbReference>
<dbReference type="NCBIfam" id="TIGR00293">
    <property type="entry name" value="prefoldin subunit alpha"/>
    <property type="match status" value="1"/>
</dbReference>
<dbReference type="PANTHER" id="PTHR12674">
    <property type="entry name" value="PREFOLDIN SUBUNIT 5"/>
    <property type="match status" value="1"/>
</dbReference>
<dbReference type="PANTHER" id="PTHR12674:SF2">
    <property type="entry name" value="PREFOLDIN SUBUNIT 5"/>
    <property type="match status" value="1"/>
</dbReference>
<dbReference type="Pfam" id="PF02996">
    <property type="entry name" value="Prefoldin"/>
    <property type="match status" value="1"/>
</dbReference>
<dbReference type="SUPFAM" id="SSF46579">
    <property type="entry name" value="Prefoldin"/>
    <property type="match status" value="1"/>
</dbReference>
<accession>O58263</accession>
<reference key="1">
    <citation type="journal article" date="1998" name="DNA Res.">
        <title>Complete sequence and gene organization of the genome of a hyper-thermophilic archaebacterium, Pyrococcus horikoshii OT3.</title>
        <authorList>
            <person name="Kawarabayasi Y."/>
            <person name="Sawada M."/>
            <person name="Horikawa H."/>
            <person name="Haikawa Y."/>
            <person name="Hino Y."/>
            <person name="Yamamoto S."/>
            <person name="Sekine M."/>
            <person name="Baba S."/>
            <person name="Kosugi H."/>
            <person name="Hosoyama A."/>
            <person name="Nagai Y."/>
            <person name="Sakai M."/>
            <person name="Ogura K."/>
            <person name="Otsuka R."/>
            <person name="Nakazawa H."/>
            <person name="Takamiya M."/>
            <person name="Ohfuku Y."/>
            <person name="Funahashi T."/>
            <person name="Tanaka T."/>
            <person name="Kudoh Y."/>
            <person name="Yamazaki J."/>
            <person name="Kushida N."/>
            <person name="Oguchi A."/>
            <person name="Aoki K."/>
            <person name="Yoshizawa T."/>
            <person name="Nakamura Y."/>
            <person name="Robb F.T."/>
            <person name="Horikoshi K."/>
            <person name="Masuchi Y."/>
            <person name="Shizuya H."/>
            <person name="Kikuchi H."/>
        </authorList>
    </citation>
    <scope>NUCLEOTIDE SEQUENCE [LARGE SCALE GENOMIC DNA]</scope>
    <source>
        <strain>ATCC 700860 / DSM 12428 / JCM 9974 / NBRC 100139 / OT-3</strain>
    </source>
</reference>